<keyword id="KW-0131">Cell cycle</keyword>
<keyword id="KW-0132">Cell division</keyword>
<keyword id="KW-0159">Chromosome partition</keyword>
<keyword id="KW-0963">Cytoplasm</keyword>
<keyword id="KW-0229">DNA integration</keyword>
<keyword id="KW-0233">DNA recombination</keyword>
<keyword id="KW-0238">DNA-binding</keyword>
<keyword id="KW-1185">Reference proteome</keyword>
<organism>
    <name type="scientific">Halalkalibacterium halodurans (strain ATCC BAA-125 / DSM 18197 / FERM 7344 / JCM 9153 / C-125)</name>
    <name type="common">Bacillus halodurans</name>
    <dbReference type="NCBI Taxonomy" id="272558"/>
    <lineage>
        <taxon>Bacteria</taxon>
        <taxon>Bacillati</taxon>
        <taxon>Bacillota</taxon>
        <taxon>Bacilli</taxon>
        <taxon>Bacillales</taxon>
        <taxon>Bacillaceae</taxon>
        <taxon>Halalkalibacterium (ex Joshi et al. 2022)</taxon>
    </lineage>
</organism>
<proteinExistence type="inferred from homology"/>
<reference key="1">
    <citation type="journal article" date="2000" name="Nucleic Acids Res.">
        <title>Complete genome sequence of the alkaliphilic bacterium Bacillus halodurans and genomic sequence comparison with Bacillus subtilis.</title>
        <authorList>
            <person name="Takami H."/>
            <person name="Nakasone K."/>
            <person name="Takaki Y."/>
            <person name="Maeno G."/>
            <person name="Sasaki R."/>
            <person name="Masui N."/>
            <person name="Fuji F."/>
            <person name="Hirama C."/>
            <person name="Nakamura Y."/>
            <person name="Ogasawara N."/>
            <person name="Kuhara S."/>
            <person name="Horikoshi K."/>
        </authorList>
    </citation>
    <scope>NUCLEOTIDE SEQUENCE [LARGE SCALE GENOMIC DNA]</scope>
    <source>
        <strain>ATCC BAA-125 / DSM 18197 / FERM 7344 / JCM 9153 / C-125</strain>
    </source>
</reference>
<sequence length="303" mass="35035">MEIQNDQWVSAFLLYLKMEKNHSPHTIVNYELDLRHFRDFMEQQSIPSFAAVSYAFVRHYLTVLYEQEYARSTVSRKLSTLRSFYQFLVREKWVMENPFLLAHTPKGVKKLPSFLYEEEMEQLLDALNGDSPLQLRNRALFETIYASGLRVSECCGLKLQDVDLSIGTVFVFGKGRKERYVPIGSFACDAIQEYIENGREKLLKKSKSVDLPGDLFLNYRGGPLTERGVRKILHQALDQAALSTRVSPHSLRHSFATHLLNNGADLRVVQDLLGHENLSTTQVYTHVTKDRLRDVYRTHHPRA</sequence>
<evidence type="ECO:0000255" key="1">
    <source>
        <dbReference type="HAMAP-Rule" id="MF_01808"/>
    </source>
</evidence>
<evidence type="ECO:0000255" key="2">
    <source>
        <dbReference type="PROSITE-ProRule" id="PRU01246"/>
    </source>
</evidence>
<evidence type="ECO:0000255" key="3">
    <source>
        <dbReference type="PROSITE-ProRule" id="PRU01248"/>
    </source>
</evidence>
<name>XERC_HALH5</name>
<gene>
    <name evidence="1" type="primary">xerC</name>
    <name type="ordered locus">BH2465</name>
</gene>
<protein>
    <recommendedName>
        <fullName evidence="1">Tyrosine recombinase XerC</fullName>
    </recommendedName>
</protein>
<dbReference type="EMBL" id="BA000004">
    <property type="protein sequence ID" value="BAB06184.1"/>
    <property type="molecule type" value="Genomic_DNA"/>
</dbReference>
<dbReference type="PIR" id="A83958">
    <property type="entry name" value="A83958"/>
</dbReference>
<dbReference type="SMR" id="Q9KA25"/>
<dbReference type="STRING" id="272558.gene:10728363"/>
<dbReference type="KEGG" id="bha:BH2465"/>
<dbReference type="eggNOG" id="COG4974">
    <property type="taxonomic scope" value="Bacteria"/>
</dbReference>
<dbReference type="HOGENOM" id="CLU_027562_9_0_9"/>
<dbReference type="Proteomes" id="UP000001258">
    <property type="component" value="Chromosome"/>
</dbReference>
<dbReference type="GO" id="GO:0005737">
    <property type="term" value="C:cytoplasm"/>
    <property type="evidence" value="ECO:0007669"/>
    <property type="project" value="UniProtKB-SubCell"/>
</dbReference>
<dbReference type="GO" id="GO:0003677">
    <property type="term" value="F:DNA binding"/>
    <property type="evidence" value="ECO:0007669"/>
    <property type="project" value="UniProtKB-KW"/>
</dbReference>
<dbReference type="GO" id="GO:0009037">
    <property type="term" value="F:tyrosine-based site-specific recombinase activity"/>
    <property type="evidence" value="ECO:0007669"/>
    <property type="project" value="UniProtKB-UniRule"/>
</dbReference>
<dbReference type="GO" id="GO:0051301">
    <property type="term" value="P:cell division"/>
    <property type="evidence" value="ECO:0007669"/>
    <property type="project" value="UniProtKB-KW"/>
</dbReference>
<dbReference type="GO" id="GO:0007059">
    <property type="term" value="P:chromosome segregation"/>
    <property type="evidence" value="ECO:0007669"/>
    <property type="project" value="UniProtKB-UniRule"/>
</dbReference>
<dbReference type="GO" id="GO:0006313">
    <property type="term" value="P:DNA transposition"/>
    <property type="evidence" value="ECO:0007669"/>
    <property type="project" value="UniProtKB-UniRule"/>
</dbReference>
<dbReference type="CDD" id="cd00798">
    <property type="entry name" value="INT_XerDC_C"/>
    <property type="match status" value="1"/>
</dbReference>
<dbReference type="Gene3D" id="1.10.150.130">
    <property type="match status" value="1"/>
</dbReference>
<dbReference type="Gene3D" id="1.10.443.10">
    <property type="entry name" value="Intergrase catalytic core"/>
    <property type="match status" value="1"/>
</dbReference>
<dbReference type="HAMAP" id="MF_01808">
    <property type="entry name" value="Recomb_XerC_XerD"/>
    <property type="match status" value="1"/>
</dbReference>
<dbReference type="InterPro" id="IPR044068">
    <property type="entry name" value="CB"/>
</dbReference>
<dbReference type="InterPro" id="IPR011010">
    <property type="entry name" value="DNA_brk_join_enz"/>
</dbReference>
<dbReference type="InterPro" id="IPR013762">
    <property type="entry name" value="Integrase-like_cat_sf"/>
</dbReference>
<dbReference type="InterPro" id="IPR002104">
    <property type="entry name" value="Integrase_catalytic"/>
</dbReference>
<dbReference type="InterPro" id="IPR010998">
    <property type="entry name" value="Integrase_recombinase_N"/>
</dbReference>
<dbReference type="InterPro" id="IPR004107">
    <property type="entry name" value="Integrase_SAM-like_N"/>
</dbReference>
<dbReference type="InterPro" id="IPR011931">
    <property type="entry name" value="Recomb_XerC"/>
</dbReference>
<dbReference type="InterPro" id="IPR011932">
    <property type="entry name" value="Recomb_XerD"/>
</dbReference>
<dbReference type="InterPro" id="IPR023009">
    <property type="entry name" value="Tyrosine_recombinase_XerC/XerD"/>
</dbReference>
<dbReference type="InterPro" id="IPR050090">
    <property type="entry name" value="Tyrosine_recombinase_XerCD"/>
</dbReference>
<dbReference type="NCBIfam" id="NF001399">
    <property type="entry name" value="PRK00283.1"/>
    <property type="match status" value="1"/>
</dbReference>
<dbReference type="NCBIfam" id="NF040815">
    <property type="entry name" value="recomb_XerA_Arch"/>
    <property type="match status" value="1"/>
</dbReference>
<dbReference type="NCBIfam" id="TIGR02224">
    <property type="entry name" value="recomb_XerC"/>
    <property type="match status" value="1"/>
</dbReference>
<dbReference type="NCBIfam" id="TIGR02225">
    <property type="entry name" value="recomb_XerD"/>
    <property type="match status" value="1"/>
</dbReference>
<dbReference type="PANTHER" id="PTHR30349">
    <property type="entry name" value="PHAGE INTEGRASE-RELATED"/>
    <property type="match status" value="1"/>
</dbReference>
<dbReference type="PANTHER" id="PTHR30349:SF77">
    <property type="entry name" value="TYROSINE RECOMBINASE XERC"/>
    <property type="match status" value="1"/>
</dbReference>
<dbReference type="Pfam" id="PF02899">
    <property type="entry name" value="Phage_int_SAM_1"/>
    <property type="match status" value="1"/>
</dbReference>
<dbReference type="Pfam" id="PF00589">
    <property type="entry name" value="Phage_integrase"/>
    <property type="match status" value="1"/>
</dbReference>
<dbReference type="SUPFAM" id="SSF56349">
    <property type="entry name" value="DNA breaking-rejoining enzymes"/>
    <property type="match status" value="1"/>
</dbReference>
<dbReference type="PROSITE" id="PS51900">
    <property type="entry name" value="CB"/>
    <property type="match status" value="1"/>
</dbReference>
<dbReference type="PROSITE" id="PS51898">
    <property type="entry name" value="TYR_RECOMBINASE"/>
    <property type="match status" value="1"/>
</dbReference>
<feature type="chain" id="PRO_0000095283" description="Tyrosine recombinase XerC">
    <location>
        <begin position="1"/>
        <end position="303"/>
    </location>
</feature>
<feature type="domain" description="Core-binding (CB)" evidence="3">
    <location>
        <begin position="3"/>
        <end position="89"/>
    </location>
</feature>
<feature type="domain" description="Tyr recombinase" evidence="2">
    <location>
        <begin position="110"/>
        <end position="297"/>
    </location>
</feature>
<feature type="active site" evidence="1">
    <location>
        <position position="150"/>
    </location>
</feature>
<feature type="active site" evidence="1">
    <location>
        <position position="174"/>
    </location>
</feature>
<feature type="active site" evidence="1">
    <location>
        <position position="249"/>
    </location>
</feature>
<feature type="active site" evidence="1">
    <location>
        <position position="252"/>
    </location>
</feature>
<feature type="active site" evidence="1">
    <location>
        <position position="275"/>
    </location>
</feature>
<feature type="active site" description="O-(3'-phospho-DNA)-tyrosine intermediate" evidence="1">
    <location>
        <position position="284"/>
    </location>
</feature>
<accession>Q9KA25</accession>
<comment type="function">
    <text evidence="1">Site-specific tyrosine recombinase, which acts by catalyzing the cutting and rejoining of the recombining DNA molecules. The XerC-XerD complex is essential to convert dimers of the bacterial chromosome into monomers to permit their segregation at cell division. It also contributes to the segregational stability of plasmids.</text>
</comment>
<comment type="subunit">
    <text evidence="1">Forms a cyclic heterotetrameric complex composed of two molecules of XerC and two molecules of XerD.</text>
</comment>
<comment type="subcellular location">
    <subcellularLocation>
        <location evidence="1">Cytoplasm</location>
    </subcellularLocation>
</comment>
<comment type="similarity">
    <text evidence="1">Belongs to the 'phage' integrase family. XerC subfamily.</text>
</comment>